<protein>
    <recommendedName>
        <fullName>Putative S-adenosyl-L-methionine-dependent methyltransferase BCG_1768c</fullName>
        <ecNumber>2.1.1.-</ecNumber>
    </recommendedName>
</protein>
<feature type="chain" id="PRO_0000361141" description="Putative S-adenosyl-L-methionine-dependent methyltransferase BCG_1768c">
    <location>
        <begin position="1"/>
        <end position="312"/>
    </location>
</feature>
<feature type="binding site" evidence="1">
    <location>
        <position position="130"/>
    </location>
    <ligand>
        <name>S-adenosyl-L-methionine</name>
        <dbReference type="ChEBI" id="CHEBI:59789"/>
    </ligand>
</feature>
<feature type="binding site" evidence="1">
    <location>
        <begin position="159"/>
        <end position="160"/>
    </location>
    <ligand>
        <name>S-adenosyl-L-methionine</name>
        <dbReference type="ChEBI" id="CHEBI:59789"/>
    </ligand>
</feature>
<comment type="function">
    <text evidence="1">Exhibits S-adenosyl-L-methionine-dependent methyltransferase activity.</text>
</comment>
<comment type="similarity">
    <text evidence="2">Belongs to the UPF0677 family.</text>
</comment>
<keyword id="KW-0489">Methyltransferase</keyword>
<keyword id="KW-0949">S-adenosyl-L-methionine</keyword>
<keyword id="KW-0808">Transferase</keyword>
<reference key="1">
    <citation type="journal article" date="2007" name="Proc. Natl. Acad. Sci. U.S.A.">
        <title>Genome plasticity of BCG and impact on vaccine efficacy.</title>
        <authorList>
            <person name="Brosch R."/>
            <person name="Gordon S.V."/>
            <person name="Garnier T."/>
            <person name="Eiglmeier K."/>
            <person name="Frigui W."/>
            <person name="Valenti P."/>
            <person name="Dos Santos S."/>
            <person name="Duthoy S."/>
            <person name="Lacroix C."/>
            <person name="Garcia-Pelayo C."/>
            <person name="Inwald J.K."/>
            <person name="Golby P."/>
            <person name="Garcia J.N."/>
            <person name="Hewinson R.G."/>
            <person name="Behr M.A."/>
            <person name="Quail M.A."/>
            <person name="Churcher C."/>
            <person name="Barrell B.G."/>
            <person name="Parkhill J."/>
            <person name="Cole S.T."/>
        </authorList>
    </citation>
    <scope>NUCLEOTIDE SEQUENCE [LARGE SCALE GENOMIC DNA]</scope>
    <source>
        <strain>BCG / Pasteur 1173P2</strain>
    </source>
</reference>
<evidence type="ECO:0000250" key="1"/>
<evidence type="ECO:0000305" key="2"/>
<sequence length="312" mass="33654">MARTDDDNWDLTSSVGVTATIVAVGRALATKDPRGLINDPFAEPLVRAVGLDLFTKMMDGELDMSTIADVSPAVAQAMVYGNAVRTKYFDDYLLNATAGGIRQVAILASGLDSRAYRLPWPTRTVVYEIDQPKVMEFKTTTLADLGAEPSAIRRAVPIDLRADWPTALQAAGFDSAAPTAWLAEGLLIYLKPQTQDRLFDNITALSAPGSMVATEFVTGIADFSAERARTISNPFRCHGVDVDLASLVYTGPRNHVLDYLAAKGWQPEGVSLAELFRRSGLDVRAADDDTIFISGCLTDHSSISPPTAAGWR</sequence>
<gene>
    <name type="ordered locus">BCG_1768c</name>
</gene>
<organism>
    <name type="scientific">Mycobacterium bovis (strain BCG / Pasteur 1173P2)</name>
    <dbReference type="NCBI Taxonomy" id="410289"/>
    <lineage>
        <taxon>Bacteria</taxon>
        <taxon>Bacillati</taxon>
        <taxon>Actinomycetota</taxon>
        <taxon>Actinomycetes</taxon>
        <taxon>Mycobacteriales</taxon>
        <taxon>Mycobacteriaceae</taxon>
        <taxon>Mycobacterium</taxon>
        <taxon>Mycobacterium tuberculosis complex</taxon>
    </lineage>
</organism>
<name>Y1768_MYCBP</name>
<dbReference type="EC" id="2.1.1.-"/>
<dbReference type="EMBL" id="AM408590">
    <property type="protein sequence ID" value="CAL71755.1"/>
    <property type="molecule type" value="Genomic_DNA"/>
</dbReference>
<dbReference type="RefSeq" id="WP_003408497.1">
    <property type="nucleotide sequence ID" value="NC_008769.1"/>
</dbReference>
<dbReference type="SMR" id="A1KJE6"/>
<dbReference type="KEGG" id="mbb:BCG_1768c"/>
<dbReference type="HOGENOM" id="CLU_056160_2_1_11"/>
<dbReference type="Proteomes" id="UP000001472">
    <property type="component" value="Chromosome"/>
</dbReference>
<dbReference type="GO" id="GO:0008168">
    <property type="term" value="F:methyltransferase activity"/>
    <property type="evidence" value="ECO:0007669"/>
    <property type="project" value="UniProtKB-KW"/>
</dbReference>
<dbReference type="GO" id="GO:0032259">
    <property type="term" value="P:methylation"/>
    <property type="evidence" value="ECO:0007669"/>
    <property type="project" value="UniProtKB-KW"/>
</dbReference>
<dbReference type="FunFam" id="3.40.50.150:FF:000152">
    <property type="entry name" value="S-adenosyl-L-methionine-dependent methyltransferase"/>
    <property type="match status" value="1"/>
</dbReference>
<dbReference type="Gene3D" id="3.40.50.150">
    <property type="entry name" value="Vaccinia Virus protein VP39"/>
    <property type="match status" value="1"/>
</dbReference>
<dbReference type="InterPro" id="IPR007213">
    <property type="entry name" value="Ppm1/Ppm2/Tcmp"/>
</dbReference>
<dbReference type="InterPro" id="IPR029063">
    <property type="entry name" value="SAM-dependent_MTases_sf"/>
</dbReference>
<dbReference type="InterPro" id="IPR011610">
    <property type="entry name" value="SAM_mthyl_Trfase_ML2640-like"/>
</dbReference>
<dbReference type="NCBIfam" id="TIGR00027">
    <property type="entry name" value="mthyl_TIGR00027"/>
    <property type="match status" value="1"/>
</dbReference>
<dbReference type="PANTHER" id="PTHR43619">
    <property type="entry name" value="S-ADENOSYL-L-METHIONINE-DEPENDENT METHYLTRANSFERASE YKTD-RELATED"/>
    <property type="match status" value="1"/>
</dbReference>
<dbReference type="PANTHER" id="PTHR43619:SF2">
    <property type="entry name" value="S-ADENOSYL-L-METHIONINE-DEPENDENT METHYLTRANSFERASES SUPERFAMILY PROTEIN"/>
    <property type="match status" value="1"/>
</dbReference>
<dbReference type="Pfam" id="PF04072">
    <property type="entry name" value="LCM"/>
    <property type="match status" value="1"/>
</dbReference>
<dbReference type="SUPFAM" id="SSF53335">
    <property type="entry name" value="S-adenosyl-L-methionine-dependent methyltransferases"/>
    <property type="match status" value="1"/>
</dbReference>
<accession>A1KJE6</accession>
<proteinExistence type="inferred from homology"/>